<feature type="chain" id="PRO_1000016323" description="Histidine--tRNA ligase">
    <location>
        <begin position="1"/>
        <end position="446"/>
    </location>
</feature>
<protein>
    <recommendedName>
        <fullName evidence="1">Histidine--tRNA ligase</fullName>
        <ecNumber evidence="1">6.1.1.21</ecNumber>
    </recommendedName>
    <alternativeName>
        <fullName evidence="1">Histidyl-tRNA synthetase</fullName>
        <shortName evidence="1">HisRS</shortName>
    </alternativeName>
</protein>
<gene>
    <name evidence="1" type="primary">hisS</name>
    <name type="ordered locus">BMA10229_A0063</name>
</gene>
<accession>A2S2A3</accession>
<name>SYH_BURM9</name>
<dbReference type="EC" id="6.1.1.21" evidence="1"/>
<dbReference type="EMBL" id="CP000546">
    <property type="protein sequence ID" value="ABN03242.1"/>
    <property type="molecule type" value="Genomic_DNA"/>
</dbReference>
<dbReference type="RefSeq" id="WP_004191559.1">
    <property type="nucleotide sequence ID" value="NC_008836.1"/>
</dbReference>
<dbReference type="SMR" id="A2S2A3"/>
<dbReference type="GeneID" id="92979077"/>
<dbReference type="KEGG" id="bml:BMA10229_A0063"/>
<dbReference type="HOGENOM" id="CLU_025113_1_1_4"/>
<dbReference type="Proteomes" id="UP000002283">
    <property type="component" value="Chromosome I"/>
</dbReference>
<dbReference type="GO" id="GO:0005737">
    <property type="term" value="C:cytoplasm"/>
    <property type="evidence" value="ECO:0007669"/>
    <property type="project" value="UniProtKB-SubCell"/>
</dbReference>
<dbReference type="GO" id="GO:0005524">
    <property type="term" value="F:ATP binding"/>
    <property type="evidence" value="ECO:0007669"/>
    <property type="project" value="UniProtKB-UniRule"/>
</dbReference>
<dbReference type="GO" id="GO:0004821">
    <property type="term" value="F:histidine-tRNA ligase activity"/>
    <property type="evidence" value="ECO:0007669"/>
    <property type="project" value="UniProtKB-UniRule"/>
</dbReference>
<dbReference type="GO" id="GO:0006427">
    <property type="term" value="P:histidyl-tRNA aminoacylation"/>
    <property type="evidence" value="ECO:0007669"/>
    <property type="project" value="UniProtKB-UniRule"/>
</dbReference>
<dbReference type="CDD" id="cd00773">
    <property type="entry name" value="HisRS-like_core"/>
    <property type="match status" value="1"/>
</dbReference>
<dbReference type="CDD" id="cd00859">
    <property type="entry name" value="HisRS_anticodon"/>
    <property type="match status" value="1"/>
</dbReference>
<dbReference type="FunFam" id="3.30.930.10:FF:000005">
    <property type="entry name" value="Histidine--tRNA ligase"/>
    <property type="match status" value="1"/>
</dbReference>
<dbReference type="Gene3D" id="3.40.50.800">
    <property type="entry name" value="Anticodon-binding domain"/>
    <property type="match status" value="1"/>
</dbReference>
<dbReference type="Gene3D" id="3.30.930.10">
    <property type="entry name" value="Bira Bifunctional Protein, Domain 2"/>
    <property type="match status" value="1"/>
</dbReference>
<dbReference type="HAMAP" id="MF_00127">
    <property type="entry name" value="His_tRNA_synth"/>
    <property type="match status" value="1"/>
</dbReference>
<dbReference type="InterPro" id="IPR006195">
    <property type="entry name" value="aa-tRNA-synth_II"/>
</dbReference>
<dbReference type="InterPro" id="IPR045864">
    <property type="entry name" value="aa-tRNA-synth_II/BPL/LPL"/>
</dbReference>
<dbReference type="InterPro" id="IPR004154">
    <property type="entry name" value="Anticodon-bd"/>
</dbReference>
<dbReference type="InterPro" id="IPR036621">
    <property type="entry name" value="Anticodon-bd_dom_sf"/>
</dbReference>
<dbReference type="InterPro" id="IPR015807">
    <property type="entry name" value="His-tRNA-ligase"/>
</dbReference>
<dbReference type="InterPro" id="IPR041715">
    <property type="entry name" value="HisRS-like_core"/>
</dbReference>
<dbReference type="InterPro" id="IPR004516">
    <property type="entry name" value="HisRS/HisZ"/>
</dbReference>
<dbReference type="InterPro" id="IPR033656">
    <property type="entry name" value="HisRS_anticodon"/>
</dbReference>
<dbReference type="NCBIfam" id="TIGR00442">
    <property type="entry name" value="hisS"/>
    <property type="match status" value="1"/>
</dbReference>
<dbReference type="PANTHER" id="PTHR43707:SF1">
    <property type="entry name" value="HISTIDINE--TRNA LIGASE, MITOCHONDRIAL-RELATED"/>
    <property type="match status" value="1"/>
</dbReference>
<dbReference type="PANTHER" id="PTHR43707">
    <property type="entry name" value="HISTIDYL-TRNA SYNTHETASE"/>
    <property type="match status" value="1"/>
</dbReference>
<dbReference type="Pfam" id="PF03129">
    <property type="entry name" value="HGTP_anticodon"/>
    <property type="match status" value="1"/>
</dbReference>
<dbReference type="Pfam" id="PF13393">
    <property type="entry name" value="tRNA-synt_His"/>
    <property type="match status" value="1"/>
</dbReference>
<dbReference type="PIRSF" id="PIRSF001549">
    <property type="entry name" value="His-tRNA_synth"/>
    <property type="match status" value="1"/>
</dbReference>
<dbReference type="SUPFAM" id="SSF52954">
    <property type="entry name" value="Class II aaRS ABD-related"/>
    <property type="match status" value="1"/>
</dbReference>
<dbReference type="SUPFAM" id="SSF55681">
    <property type="entry name" value="Class II aaRS and biotin synthetases"/>
    <property type="match status" value="1"/>
</dbReference>
<dbReference type="PROSITE" id="PS50862">
    <property type="entry name" value="AA_TRNA_LIGASE_II"/>
    <property type="match status" value="1"/>
</dbReference>
<proteinExistence type="inferred from homology"/>
<sequence>MTEQKRKLEKLTGVKGMNDILPQDAGLWEFFEATVKSLLRAYGYQNIRTPIVEHTQLFTRGIGEVTDIVEKEMYSFVDALNGENLTLRPENTAAVVRAAIEHNMLYDGPKRLWYLGPMFRHERPQRGRYRQFHQVGVEALGFAGPDADAEIIMMCQRLWDDLGLTGIKLEINSLGLAEERAAHRVELIKYLEQHVDKLDDDAQRRLYTNPLRVLDTKNPALQEIVRNAPQLIDFLGDVSRAHFDGLQQLLKANNLPFTINPRLVRGLDYYNLTVFEWVTDKLGAQGTVAAGGRYDPLIEQLGGKPTAACGWAMGVERILELLKEEHLVPEQEGVDVYVVHQGDAAREQAFIVAERLRDTGLDVILHCSADGAGASFKSQMKRADASGAAFAVIFGEDEVANGTVSVKPLRGTGAEGEKNVQQSVPVESLTEFLINAMVATAEDGDD</sequence>
<reference key="1">
    <citation type="journal article" date="2010" name="Genome Biol. Evol.">
        <title>Continuing evolution of Burkholderia mallei through genome reduction and large-scale rearrangements.</title>
        <authorList>
            <person name="Losada L."/>
            <person name="Ronning C.M."/>
            <person name="DeShazer D."/>
            <person name="Woods D."/>
            <person name="Fedorova N."/>
            <person name="Kim H.S."/>
            <person name="Shabalina S.A."/>
            <person name="Pearson T.R."/>
            <person name="Brinkac L."/>
            <person name="Tan P."/>
            <person name="Nandi T."/>
            <person name="Crabtree J."/>
            <person name="Badger J."/>
            <person name="Beckstrom-Sternberg S."/>
            <person name="Saqib M."/>
            <person name="Schutzer S.E."/>
            <person name="Keim P."/>
            <person name="Nierman W.C."/>
        </authorList>
    </citation>
    <scope>NUCLEOTIDE SEQUENCE [LARGE SCALE GENOMIC DNA]</scope>
    <source>
        <strain>NCTC 10229</strain>
    </source>
</reference>
<comment type="catalytic activity">
    <reaction evidence="1">
        <text>tRNA(His) + L-histidine + ATP = L-histidyl-tRNA(His) + AMP + diphosphate + H(+)</text>
        <dbReference type="Rhea" id="RHEA:17313"/>
        <dbReference type="Rhea" id="RHEA-COMP:9665"/>
        <dbReference type="Rhea" id="RHEA-COMP:9689"/>
        <dbReference type="ChEBI" id="CHEBI:15378"/>
        <dbReference type="ChEBI" id="CHEBI:30616"/>
        <dbReference type="ChEBI" id="CHEBI:33019"/>
        <dbReference type="ChEBI" id="CHEBI:57595"/>
        <dbReference type="ChEBI" id="CHEBI:78442"/>
        <dbReference type="ChEBI" id="CHEBI:78527"/>
        <dbReference type="ChEBI" id="CHEBI:456215"/>
        <dbReference type="EC" id="6.1.1.21"/>
    </reaction>
</comment>
<comment type="subunit">
    <text evidence="1">Homodimer.</text>
</comment>
<comment type="subcellular location">
    <subcellularLocation>
        <location evidence="1">Cytoplasm</location>
    </subcellularLocation>
</comment>
<comment type="similarity">
    <text evidence="1">Belongs to the class-II aminoacyl-tRNA synthetase family.</text>
</comment>
<evidence type="ECO:0000255" key="1">
    <source>
        <dbReference type="HAMAP-Rule" id="MF_00127"/>
    </source>
</evidence>
<keyword id="KW-0030">Aminoacyl-tRNA synthetase</keyword>
<keyword id="KW-0067">ATP-binding</keyword>
<keyword id="KW-0963">Cytoplasm</keyword>
<keyword id="KW-0436">Ligase</keyword>
<keyword id="KW-0547">Nucleotide-binding</keyword>
<keyword id="KW-0648">Protein biosynthesis</keyword>
<organism>
    <name type="scientific">Burkholderia mallei (strain NCTC 10229)</name>
    <dbReference type="NCBI Taxonomy" id="412022"/>
    <lineage>
        <taxon>Bacteria</taxon>
        <taxon>Pseudomonadati</taxon>
        <taxon>Pseudomonadota</taxon>
        <taxon>Betaproteobacteria</taxon>
        <taxon>Burkholderiales</taxon>
        <taxon>Burkholderiaceae</taxon>
        <taxon>Burkholderia</taxon>
        <taxon>pseudomallei group</taxon>
    </lineage>
</organism>